<comment type="function">
    <text evidence="1">Protein S19 forms a complex with S13 that binds strongly to the 16S ribosomal RNA.</text>
</comment>
<comment type="similarity">
    <text evidence="1">Belongs to the universal ribosomal protein uS19 family.</text>
</comment>
<feature type="chain" id="PRO_0000129915" description="Small ribosomal subunit protein uS19">
    <location>
        <begin position="1"/>
        <end position="92"/>
    </location>
</feature>
<reference key="1">
    <citation type="journal article" date="2002" name="Proc. Natl. Acad. Sci. U.S.A.">
        <title>Genome sequence of a serotype M3 strain of group A Streptococcus: phage-encoded toxins, the high-virulence phenotype, and clone emergence.</title>
        <authorList>
            <person name="Beres S.B."/>
            <person name="Sylva G.L."/>
            <person name="Barbian K.D."/>
            <person name="Lei B."/>
            <person name="Hoff J.S."/>
            <person name="Mammarella N.D."/>
            <person name="Liu M.-Y."/>
            <person name="Smoot J.C."/>
            <person name="Porcella S.F."/>
            <person name="Parkins L.D."/>
            <person name="Campbell D.S."/>
            <person name="Smith T.M."/>
            <person name="McCormick J.K."/>
            <person name="Leung D.Y.M."/>
            <person name="Schlievert P.M."/>
            <person name="Musser J.M."/>
        </authorList>
    </citation>
    <scope>NUCLEOTIDE SEQUENCE [LARGE SCALE GENOMIC DNA]</scope>
    <source>
        <strain>ATCC BAA-595 / MGAS315</strain>
    </source>
</reference>
<gene>
    <name evidence="1" type="primary">rpsS</name>
    <name type="ordered locus">SpyM3_0044</name>
</gene>
<dbReference type="EMBL" id="AE014074">
    <property type="protein sequence ID" value="AAM78651.1"/>
    <property type="molecule type" value="Genomic_DNA"/>
</dbReference>
<dbReference type="RefSeq" id="WP_000533765.1">
    <property type="nucleotide sequence ID" value="NC_004070.1"/>
</dbReference>
<dbReference type="SMR" id="P0DE82"/>
<dbReference type="GeneID" id="98392396"/>
<dbReference type="KEGG" id="spg:SpyM3_0044"/>
<dbReference type="HOGENOM" id="CLU_144911_0_1_9"/>
<dbReference type="Proteomes" id="UP000000564">
    <property type="component" value="Chromosome"/>
</dbReference>
<dbReference type="GO" id="GO:0005737">
    <property type="term" value="C:cytoplasm"/>
    <property type="evidence" value="ECO:0007669"/>
    <property type="project" value="UniProtKB-ARBA"/>
</dbReference>
<dbReference type="GO" id="GO:0015935">
    <property type="term" value="C:small ribosomal subunit"/>
    <property type="evidence" value="ECO:0007669"/>
    <property type="project" value="InterPro"/>
</dbReference>
<dbReference type="GO" id="GO:0019843">
    <property type="term" value="F:rRNA binding"/>
    <property type="evidence" value="ECO:0007669"/>
    <property type="project" value="UniProtKB-UniRule"/>
</dbReference>
<dbReference type="GO" id="GO:0003735">
    <property type="term" value="F:structural constituent of ribosome"/>
    <property type="evidence" value="ECO:0007669"/>
    <property type="project" value="InterPro"/>
</dbReference>
<dbReference type="GO" id="GO:0000028">
    <property type="term" value="P:ribosomal small subunit assembly"/>
    <property type="evidence" value="ECO:0007669"/>
    <property type="project" value="TreeGrafter"/>
</dbReference>
<dbReference type="GO" id="GO:0006412">
    <property type="term" value="P:translation"/>
    <property type="evidence" value="ECO:0007669"/>
    <property type="project" value="UniProtKB-UniRule"/>
</dbReference>
<dbReference type="FunFam" id="3.30.860.10:FF:000001">
    <property type="entry name" value="30S ribosomal protein S19"/>
    <property type="match status" value="1"/>
</dbReference>
<dbReference type="Gene3D" id="3.30.860.10">
    <property type="entry name" value="30s Ribosomal Protein S19, Chain A"/>
    <property type="match status" value="1"/>
</dbReference>
<dbReference type="HAMAP" id="MF_00531">
    <property type="entry name" value="Ribosomal_uS19"/>
    <property type="match status" value="1"/>
</dbReference>
<dbReference type="InterPro" id="IPR002222">
    <property type="entry name" value="Ribosomal_uS19"/>
</dbReference>
<dbReference type="InterPro" id="IPR005732">
    <property type="entry name" value="Ribosomal_uS19_bac-type"/>
</dbReference>
<dbReference type="InterPro" id="IPR020934">
    <property type="entry name" value="Ribosomal_uS19_CS"/>
</dbReference>
<dbReference type="InterPro" id="IPR023575">
    <property type="entry name" value="Ribosomal_uS19_SF"/>
</dbReference>
<dbReference type="NCBIfam" id="TIGR01050">
    <property type="entry name" value="rpsS_bact"/>
    <property type="match status" value="1"/>
</dbReference>
<dbReference type="PANTHER" id="PTHR11880">
    <property type="entry name" value="RIBOSOMAL PROTEIN S19P FAMILY MEMBER"/>
    <property type="match status" value="1"/>
</dbReference>
<dbReference type="PANTHER" id="PTHR11880:SF8">
    <property type="entry name" value="SMALL RIBOSOMAL SUBUNIT PROTEIN US19M"/>
    <property type="match status" value="1"/>
</dbReference>
<dbReference type="Pfam" id="PF00203">
    <property type="entry name" value="Ribosomal_S19"/>
    <property type="match status" value="1"/>
</dbReference>
<dbReference type="PIRSF" id="PIRSF002144">
    <property type="entry name" value="Ribosomal_S19"/>
    <property type="match status" value="1"/>
</dbReference>
<dbReference type="PRINTS" id="PR00975">
    <property type="entry name" value="RIBOSOMALS19"/>
</dbReference>
<dbReference type="SUPFAM" id="SSF54570">
    <property type="entry name" value="Ribosomal protein S19"/>
    <property type="match status" value="1"/>
</dbReference>
<dbReference type="PROSITE" id="PS00323">
    <property type="entry name" value="RIBOSOMAL_S19"/>
    <property type="match status" value="1"/>
</dbReference>
<evidence type="ECO:0000255" key="1">
    <source>
        <dbReference type="HAMAP-Rule" id="MF_00531"/>
    </source>
</evidence>
<evidence type="ECO:0000305" key="2"/>
<keyword id="KW-0687">Ribonucleoprotein</keyword>
<keyword id="KW-0689">Ribosomal protein</keyword>
<keyword id="KW-0694">RNA-binding</keyword>
<keyword id="KW-0699">rRNA-binding</keyword>
<protein>
    <recommendedName>
        <fullName evidence="1">Small ribosomal subunit protein uS19</fullName>
    </recommendedName>
    <alternativeName>
        <fullName evidence="2">30S ribosomal protein S19</fullName>
    </alternativeName>
</protein>
<sequence>MGRSLKKGPFVDEHLMKKVEAQANDEKKKVIKTWSRRSTIFPSFIGYTIAVYDGRKHVPVYIQEDMVGHKLGEFAPTRTYKGHAADDKKTRR</sequence>
<proteinExistence type="inferred from homology"/>
<accession>P0DE82</accession>
<accession>P66497</accession>
<accession>Q9A1X0</accession>
<organism>
    <name type="scientific">Streptococcus pyogenes serotype M3 (strain ATCC BAA-595 / MGAS315)</name>
    <dbReference type="NCBI Taxonomy" id="198466"/>
    <lineage>
        <taxon>Bacteria</taxon>
        <taxon>Bacillati</taxon>
        <taxon>Bacillota</taxon>
        <taxon>Bacilli</taxon>
        <taxon>Lactobacillales</taxon>
        <taxon>Streptococcaceae</taxon>
        <taxon>Streptococcus</taxon>
    </lineage>
</organism>
<name>RS19_STRP3</name>